<name>PSBZ_GOSHI</name>
<geneLocation type="chloroplast"/>
<accession>Q2L905</accession>
<evidence type="ECO:0000255" key="1">
    <source>
        <dbReference type="HAMAP-Rule" id="MF_00644"/>
    </source>
</evidence>
<comment type="function">
    <text evidence="1">May control the interaction of photosystem II (PSII) cores with the light-harvesting antenna, regulates electron flow through the 2 photosystem reaction centers. PSII is a light-driven water plastoquinone oxidoreductase, using light energy to abstract electrons from H(2)O, generating a proton gradient subsequently used for ATP formation.</text>
</comment>
<comment type="subunit">
    <text evidence="1">PSII is composed of 1 copy each of membrane proteins PsbA, PsbB, PsbC, PsbD, PsbE, PsbF, PsbH, PsbI, PsbJ, PsbK, PsbL, PsbM, PsbT, PsbY, PsbZ, Psb30/Ycf12, at least 3 peripheral proteins of the oxygen-evolving complex and a large number of cofactors. It forms dimeric complexes.</text>
</comment>
<comment type="subcellular location">
    <subcellularLocation>
        <location evidence="1">Plastid</location>
        <location evidence="1">Chloroplast thylakoid membrane</location>
        <topology evidence="1">Multi-pass membrane protein</topology>
    </subcellularLocation>
</comment>
<comment type="similarity">
    <text evidence="1">Belongs to the PsbZ family.</text>
</comment>
<organism>
    <name type="scientific">Gossypium hirsutum</name>
    <name type="common">Upland cotton</name>
    <name type="synonym">Gossypium mexicanum</name>
    <dbReference type="NCBI Taxonomy" id="3635"/>
    <lineage>
        <taxon>Eukaryota</taxon>
        <taxon>Viridiplantae</taxon>
        <taxon>Streptophyta</taxon>
        <taxon>Embryophyta</taxon>
        <taxon>Tracheophyta</taxon>
        <taxon>Spermatophyta</taxon>
        <taxon>Magnoliopsida</taxon>
        <taxon>eudicotyledons</taxon>
        <taxon>Gunneridae</taxon>
        <taxon>Pentapetalae</taxon>
        <taxon>rosids</taxon>
        <taxon>malvids</taxon>
        <taxon>Malvales</taxon>
        <taxon>Malvaceae</taxon>
        <taxon>Malvoideae</taxon>
        <taxon>Gossypium</taxon>
    </lineage>
</organism>
<gene>
    <name evidence="1" type="primary">psbZ</name>
</gene>
<feature type="chain" id="PRO_0000277219" description="Photosystem II reaction center protein Z">
    <location>
        <begin position="1"/>
        <end position="62"/>
    </location>
</feature>
<feature type="transmembrane region" description="Helical" evidence="1">
    <location>
        <begin position="8"/>
        <end position="28"/>
    </location>
</feature>
<feature type="transmembrane region" description="Helical" evidence="1">
    <location>
        <begin position="41"/>
        <end position="61"/>
    </location>
</feature>
<dbReference type="EMBL" id="DQ345959">
    <property type="protein sequence ID" value="ABC73625.1"/>
    <property type="molecule type" value="Genomic_DNA"/>
</dbReference>
<dbReference type="RefSeq" id="YP_538932.1">
    <property type="nucleotide sequence ID" value="NC_007944.1"/>
</dbReference>
<dbReference type="SMR" id="Q2L905"/>
<dbReference type="GeneID" id="3989208"/>
<dbReference type="KEGG" id="ghi:3989208"/>
<dbReference type="OrthoDB" id="39856at41938"/>
<dbReference type="Proteomes" id="UP000189702">
    <property type="component" value="Chloroplast Pltd"/>
</dbReference>
<dbReference type="GO" id="GO:0009535">
    <property type="term" value="C:chloroplast thylakoid membrane"/>
    <property type="evidence" value="ECO:0007669"/>
    <property type="project" value="UniProtKB-SubCell"/>
</dbReference>
<dbReference type="GO" id="GO:0009539">
    <property type="term" value="C:photosystem II reaction center"/>
    <property type="evidence" value="ECO:0007669"/>
    <property type="project" value="InterPro"/>
</dbReference>
<dbReference type="GO" id="GO:0015979">
    <property type="term" value="P:photosynthesis"/>
    <property type="evidence" value="ECO:0007669"/>
    <property type="project" value="UniProtKB-UniRule"/>
</dbReference>
<dbReference type="GO" id="GO:0042549">
    <property type="term" value="P:photosystem II stabilization"/>
    <property type="evidence" value="ECO:0007669"/>
    <property type="project" value="InterPro"/>
</dbReference>
<dbReference type="FunFam" id="1.10.287.740:FF:000001">
    <property type="entry name" value="Photosystem II reaction center protein Z"/>
    <property type="match status" value="1"/>
</dbReference>
<dbReference type="Gene3D" id="1.10.287.740">
    <property type="entry name" value="Photosystem II PsbZ, reaction centre"/>
    <property type="match status" value="1"/>
</dbReference>
<dbReference type="HAMAP" id="MF_00644">
    <property type="entry name" value="PSII_PsbZ"/>
    <property type="match status" value="1"/>
</dbReference>
<dbReference type="InterPro" id="IPR002644">
    <property type="entry name" value="PSII_PsbZ"/>
</dbReference>
<dbReference type="InterPro" id="IPR036512">
    <property type="entry name" value="PSII_PsbZ_sf"/>
</dbReference>
<dbReference type="NCBIfam" id="TIGR03043">
    <property type="entry name" value="PS_II_psbZ"/>
    <property type="match status" value="1"/>
</dbReference>
<dbReference type="PANTHER" id="PTHR34971">
    <property type="entry name" value="PHOTOSYSTEM II REACTION CENTER PROTEIN Z"/>
    <property type="match status" value="1"/>
</dbReference>
<dbReference type="PANTHER" id="PTHR34971:SF2">
    <property type="entry name" value="PHOTOSYSTEM II REACTION CENTER PROTEIN Z"/>
    <property type="match status" value="1"/>
</dbReference>
<dbReference type="Pfam" id="PF01737">
    <property type="entry name" value="Ycf9"/>
    <property type="match status" value="1"/>
</dbReference>
<dbReference type="SUPFAM" id="SSF161055">
    <property type="entry name" value="PsbZ-like"/>
    <property type="match status" value="1"/>
</dbReference>
<sequence length="62" mass="6567">MTIAFQLAVFALIATSSILLISVPVVFASPDGWLSNKNIVFSGTSLWIGLVFLVGILNSLIS</sequence>
<keyword id="KW-0150">Chloroplast</keyword>
<keyword id="KW-0472">Membrane</keyword>
<keyword id="KW-0602">Photosynthesis</keyword>
<keyword id="KW-0604">Photosystem II</keyword>
<keyword id="KW-0934">Plastid</keyword>
<keyword id="KW-0674">Reaction center</keyword>
<keyword id="KW-1185">Reference proteome</keyword>
<keyword id="KW-0793">Thylakoid</keyword>
<keyword id="KW-0812">Transmembrane</keyword>
<keyword id="KW-1133">Transmembrane helix</keyword>
<proteinExistence type="inferred from homology"/>
<protein>
    <recommendedName>
        <fullName evidence="1">Photosystem II reaction center protein Z</fullName>
        <shortName evidence="1">PSII-Z</shortName>
    </recommendedName>
</protein>
<reference key="1">
    <citation type="journal article" date="2006" name="BMC Genomics">
        <title>The complete chloroplast genome sequence of Gossypium hirsutum: organization and phylogenetic relationships to other angiosperms.</title>
        <authorList>
            <person name="Lee S.-B."/>
            <person name="Kaittanis C."/>
            <person name="Jansen R.K."/>
            <person name="Hostetler J.B."/>
            <person name="Tallon L.J."/>
            <person name="Town C.D."/>
            <person name="Daniell H."/>
        </authorList>
    </citation>
    <scope>NUCLEOTIDE SEQUENCE [LARGE SCALE GENOMIC DNA]</scope>
    <source>
        <strain>cv. Coker 310FR</strain>
    </source>
</reference>